<keyword id="KW-0378">Hydrolase</keyword>
<keyword id="KW-0546">Nucleotide metabolism</keyword>
<keyword id="KW-0547">Nucleotide-binding</keyword>
<proteinExistence type="inferred from homology"/>
<protein>
    <recommendedName>
        <fullName evidence="1">dCTP deaminase</fullName>
        <ecNumber evidence="1">3.5.4.13</ecNumber>
    </recommendedName>
    <alternativeName>
        <fullName evidence="1">Deoxycytidine triphosphate deaminase</fullName>
    </alternativeName>
</protein>
<comment type="function">
    <text evidence="1">Catalyzes the deamination of dCTP to dUTP.</text>
</comment>
<comment type="catalytic activity">
    <reaction evidence="1">
        <text>dCTP + H2O + H(+) = dUTP + NH4(+)</text>
        <dbReference type="Rhea" id="RHEA:22680"/>
        <dbReference type="ChEBI" id="CHEBI:15377"/>
        <dbReference type="ChEBI" id="CHEBI:15378"/>
        <dbReference type="ChEBI" id="CHEBI:28938"/>
        <dbReference type="ChEBI" id="CHEBI:61481"/>
        <dbReference type="ChEBI" id="CHEBI:61555"/>
        <dbReference type="EC" id="3.5.4.13"/>
    </reaction>
</comment>
<comment type="pathway">
    <text evidence="1">Pyrimidine metabolism; dUMP biosynthesis; dUMP from dCTP (dUTP route): step 1/2.</text>
</comment>
<comment type="subunit">
    <text evidence="1">Homotrimer.</text>
</comment>
<comment type="similarity">
    <text evidence="1">Belongs to the dCTP deaminase family.</text>
</comment>
<evidence type="ECO:0000255" key="1">
    <source>
        <dbReference type="HAMAP-Rule" id="MF_00146"/>
    </source>
</evidence>
<evidence type="ECO:0000256" key="2">
    <source>
        <dbReference type="SAM" id="MobiDB-lite"/>
    </source>
</evidence>
<gene>
    <name evidence="1" type="primary">dcd</name>
    <name type="ordered locus">EcSMS35_0995</name>
</gene>
<organism>
    <name type="scientific">Escherichia coli (strain SMS-3-5 / SECEC)</name>
    <dbReference type="NCBI Taxonomy" id="439855"/>
    <lineage>
        <taxon>Bacteria</taxon>
        <taxon>Pseudomonadati</taxon>
        <taxon>Pseudomonadota</taxon>
        <taxon>Gammaproteobacteria</taxon>
        <taxon>Enterobacterales</taxon>
        <taxon>Enterobacteriaceae</taxon>
        <taxon>Escherichia</taxon>
    </lineage>
</organism>
<reference key="1">
    <citation type="journal article" date="2008" name="J. Bacteriol.">
        <title>Insights into the environmental resistance gene pool from the genome sequence of the multidrug-resistant environmental isolate Escherichia coli SMS-3-5.</title>
        <authorList>
            <person name="Fricke W.F."/>
            <person name="Wright M.S."/>
            <person name="Lindell A.H."/>
            <person name="Harkins D.M."/>
            <person name="Baker-Austin C."/>
            <person name="Ravel J."/>
            <person name="Stepanauskas R."/>
        </authorList>
    </citation>
    <scope>NUCLEOTIDE SEQUENCE [LARGE SCALE GENOMIC DNA]</scope>
    <source>
        <strain>SMS-3-5 / SECEC</strain>
    </source>
</reference>
<accession>B1LNX6</accession>
<sequence length="193" mass="21251">MRLCDRDIEAWLDEGRLSINPRPPVERINGATVDVRLGNKFRTFRGHTAAFIDLSGPKDEVSAALDRVMSDEIVLDESEAFYLHPGELALAVTLESVTLPADLVGWLDGRSSLARLGLMVHVTAHRIDPGWSGCIVLEFYNSGKLPLALRPGMLIGALSFEPLSGPAARPYNRREDAKYRNQQGAVASRIDKD</sequence>
<feature type="chain" id="PRO_1000117973" description="dCTP deaminase">
    <location>
        <begin position="1"/>
        <end position="193"/>
    </location>
</feature>
<feature type="region of interest" description="Disordered" evidence="2">
    <location>
        <begin position="169"/>
        <end position="193"/>
    </location>
</feature>
<feature type="active site" description="Proton donor/acceptor" evidence="1">
    <location>
        <position position="138"/>
    </location>
</feature>
<feature type="binding site" evidence="1">
    <location>
        <begin position="110"/>
        <end position="115"/>
    </location>
    <ligand>
        <name>dCTP</name>
        <dbReference type="ChEBI" id="CHEBI:61481"/>
    </ligand>
</feature>
<feature type="binding site" evidence="1">
    <location>
        <position position="128"/>
    </location>
    <ligand>
        <name>dCTP</name>
        <dbReference type="ChEBI" id="CHEBI:61481"/>
    </ligand>
</feature>
<feature type="binding site" evidence="1">
    <location>
        <begin position="136"/>
        <end position="138"/>
    </location>
    <ligand>
        <name>dCTP</name>
        <dbReference type="ChEBI" id="CHEBI:61481"/>
    </ligand>
</feature>
<feature type="binding site" evidence="1">
    <location>
        <position position="171"/>
    </location>
    <ligand>
        <name>dCTP</name>
        <dbReference type="ChEBI" id="CHEBI:61481"/>
    </ligand>
</feature>
<feature type="binding site" evidence="1">
    <location>
        <position position="178"/>
    </location>
    <ligand>
        <name>dCTP</name>
        <dbReference type="ChEBI" id="CHEBI:61481"/>
    </ligand>
</feature>
<feature type="binding site" evidence="1">
    <location>
        <position position="182"/>
    </location>
    <ligand>
        <name>dCTP</name>
        <dbReference type="ChEBI" id="CHEBI:61481"/>
    </ligand>
</feature>
<dbReference type="EC" id="3.5.4.13" evidence="1"/>
<dbReference type="EMBL" id="CP000970">
    <property type="protein sequence ID" value="ACB20000.1"/>
    <property type="molecule type" value="Genomic_DNA"/>
</dbReference>
<dbReference type="RefSeq" id="WP_001234777.1">
    <property type="nucleotide sequence ID" value="NC_010498.1"/>
</dbReference>
<dbReference type="SMR" id="B1LNX6"/>
<dbReference type="KEGG" id="ecm:EcSMS35_0995"/>
<dbReference type="HOGENOM" id="CLU_087476_2_0_6"/>
<dbReference type="UniPathway" id="UPA00610">
    <property type="reaction ID" value="UER00665"/>
</dbReference>
<dbReference type="Proteomes" id="UP000007011">
    <property type="component" value="Chromosome"/>
</dbReference>
<dbReference type="GO" id="GO:0008829">
    <property type="term" value="F:dCTP deaminase activity"/>
    <property type="evidence" value="ECO:0007669"/>
    <property type="project" value="UniProtKB-UniRule"/>
</dbReference>
<dbReference type="GO" id="GO:0000166">
    <property type="term" value="F:nucleotide binding"/>
    <property type="evidence" value="ECO:0007669"/>
    <property type="project" value="UniProtKB-KW"/>
</dbReference>
<dbReference type="GO" id="GO:0006226">
    <property type="term" value="P:dUMP biosynthetic process"/>
    <property type="evidence" value="ECO:0007669"/>
    <property type="project" value="UniProtKB-UniPathway"/>
</dbReference>
<dbReference type="GO" id="GO:0006229">
    <property type="term" value="P:dUTP biosynthetic process"/>
    <property type="evidence" value="ECO:0007669"/>
    <property type="project" value="UniProtKB-UniRule"/>
</dbReference>
<dbReference type="GO" id="GO:0015949">
    <property type="term" value="P:nucleobase-containing small molecule interconversion"/>
    <property type="evidence" value="ECO:0007669"/>
    <property type="project" value="TreeGrafter"/>
</dbReference>
<dbReference type="CDD" id="cd07557">
    <property type="entry name" value="trimeric_dUTPase"/>
    <property type="match status" value="1"/>
</dbReference>
<dbReference type="FunFam" id="2.70.40.10:FF:000003">
    <property type="entry name" value="dCTP deaminase"/>
    <property type="match status" value="1"/>
</dbReference>
<dbReference type="Gene3D" id="2.70.40.10">
    <property type="match status" value="1"/>
</dbReference>
<dbReference type="HAMAP" id="MF_00146">
    <property type="entry name" value="dCTP_deaminase"/>
    <property type="match status" value="1"/>
</dbReference>
<dbReference type="InterPro" id="IPR011962">
    <property type="entry name" value="dCTP_deaminase"/>
</dbReference>
<dbReference type="InterPro" id="IPR036157">
    <property type="entry name" value="dUTPase-like_sf"/>
</dbReference>
<dbReference type="InterPro" id="IPR033704">
    <property type="entry name" value="dUTPase_trimeric"/>
</dbReference>
<dbReference type="NCBIfam" id="TIGR02274">
    <property type="entry name" value="dCTP_deam"/>
    <property type="match status" value="1"/>
</dbReference>
<dbReference type="PANTHER" id="PTHR42680">
    <property type="entry name" value="DCTP DEAMINASE"/>
    <property type="match status" value="1"/>
</dbReference>
<dbReference type="PANTHER" id="PTHR42680:SF3">
    <property type="entry name" value="DCTP DEAMINASE"/>
    <property type="match status" value="1"/>
</dbReference>
<dbReference type="Pfam" id="PF22769">
    <property type="entry name" value="DCD"/>
    <property type="match status" value="1"/>
</dbReference>
<dbReference type="SUPFAM" id="SSF51283">
    <property type="entry name" value="dUTPase-like"/>
    <property type="match status" value="1"/>
</dbReference>
<name>DCD_ECOSM</name>